<protein>
    <recommendedName>
        <fullName evidence="1">Large ribosomal subunit protein uL22</fullName>
    </recommendedName>
    <alternativeName>
        <fullName evidence="3">50S ribosomal protein L22</fullName>
    </alternativeName>
</protein>
<keyword id="KW-0002">3D-structure</keyword>
<keyword id="KW-1185">Reference proteome</keyword>
<keyword id="KW-0687">Ribonucleoprotein</keyword>
<keyword id="KW-0689">Ribosomal protein</keyword>
<keyword id="KW-0694">RNA-binding</keyword>
<keyword id="KW-0699">rRNA-binding</keyword>
<evidence type="ECO:0000255" key="1">
    <source>
        <dbReference type="HAMAP-Rule" id="MF_01331"/>
    </source>
</evidence>
<evidence type="ECO:0000256" key="2">
    <source>
        <dbReference type="SAM" id="MobiDB-lite"/>
    </source>
</evidence>
<evidence type="ECO:0000305" key="3"/>
<evidence type="ECO:0007829" key="4">
    <source>
        <dbReference type="PDB" id="7F0D"/>
    </source>
</evidence>
<dbReference type="EMBL" id="CP000611">
    <property type="protein sequence ID" value="ABQ72442.1"/>
    <property type="molecule type" value="Genomic_DNA"/>
</dbReference>
<dbReference type="RefSeq" id="WP_003403587.1">
    <property type="nucleotide sequence ID" value="NZ_CP016972.1"/>
</dbReference>
<dbReference type="PDB" id="7F0D">
    <property type="method" value="EM"/>
    <property type="resolution" value="3.30 A"/>
    <property type="chains" value="S=1-197"/>
</dbReference>
<dbReference type="PDBsum" id="7F0D"/>
<dbReference type="SMR" id="A5U092"/>
<dbReference type="KEGG" id="mra:MRA_0714"/>
<dbReference type="eggNOG" id="COG0091">
    <property type="taxonomic scope" value="Bacteria"/>
</dbReference>
<dbReference type="HOGENOM" id="CLU_083987_1_0_11"/>
<dbReference type="Proteomes" id="UP000001988">
    <property type="component" value="Chromosome"/>
</dbReference>
<dbReference type="GO" id="GO:0022625">
    <property type="term" value="C:cytosolic large ribosomal subunit"/>
    <property type="evidence" value="ECO:0007669"/>
    <property type="project" value="TreeGrafter"/>
</dbReference>
<dbReference type="GO" id="GO:0019843">
    <property type="term" value="F:rRNA binding"/>
    <property type="evidence" value="ECO:0007669"/>
    <property type="project" value="UniProtKB-UniRule"/>
</dbReference>
<dbReference type="GO" id="GO:0003735">
    <property type="term" value="F:structural constituent of ribosome"/>
    <property type="evidence" value="ECO:0007669"/>
    <property type="project" value="InterPro"/>
</dbReference>
<dbReference type="GO" id="GO:0006412">
    <property type="term" value="P:translation"/>
    <property type="evidence" value="ECO:0007669"/>
    <property type="project" value="UniProtKB-UniRule"/>
</dbReference>
<dbReference type="CDD" id="cd00336">
    <property type="entry name" value="Ribosomal_L22"/>
    <property type="match status" value="1"/>
</dbReference>
<dbReference type="FunFam" id="3.90.470.10:FF:000002">
    <property type="entry name" value="50S ribosomal protein L22"/>
    <property type="match status" value="1"/>
</dbReference>
<dbReference type="Gene3D" id="3.90.470.10">
    <property type="entry name" value="Ribosomal protein L22/L17"/>
    <property type="match status" value="1"/>
</dbReference>
<dbReference type="HAMAP" id="MF_01331_B">
    <property type="entry name" value="Ribosomal_uL22_B"/>
    <property type="match status" value="1"/>
</dbReference>
<dbReference type="InterPro" id="IPR001063">
    <property type="entry name" value="Ribosomal_uL22"/>
</dbReference>
<dbReference type="InterPro" id="IPR005727">
    <property type="entry name" value="Ribosomal_uL22_bac/chlpt-type"/>
</dbReference>
<dbReference type="InterPro" id="IPR047867">
    <property type="entry name" value="Ribosomal_uL22_bac/org-type"/>
</dbReference>
<dbReference type="InterPro" id="IPR018260">
    <property type="entry name" value="Ribosomal_uL22_CS"/>
</dbReference>
<dbReference type="InterPro" id="IPR036394">
    <property type="entry name" value="Ribosomal_uL22_sf"/>
</dbReference>
<dbReference type="NCBIfam" id="TIGR01044">
    <property type="entry name" value="rplV_bact"/>
    <property type="match status" value="1"/>
</dbReference>
<dbReference type="PANTHER" id="PTHR13501">
    <property type="entry name" value="CHLOROPLAST 50S RIBOSOMAL PROTEIN L22-RELATED"/>
    <property type="match status" value="1"/>
</dbReference>
<dbReference type="PANTHER" id="PTHR13501:SF8">
    <property type="entry name" value="LARGE RIBOSOMAL SUBUNIT PROTEIN UL22M"/>
    <property type="match status" value="1"/>
</dbReference>
<dbReference type="Pfam" id="PF00237">
    <property type="entry name" value="Ribosomal_L22"/>
    <property type="match status" value="1"/>
</dbReference>
<dbReference type="SUPFAM" id="SSF54843">
    <property type="entry name" value="Ribosomal protein L22"/>
    <property type="match status" value="1"/>
</dbReference>
<dbReference type="PROSITE" id="PS00464">
    <property type="entry name" value="RIBOSOMAL_L22"/>
    <property type="match status" value="1"/>
</dbReference>
<organism>
    <name type="scientific">Mycobacterium tuberculosis (strain ATCC 25177 / H37Ra)</name>
    <dbReference type="NCBI Taxonomy" id="419947"/>
    <lineage>
        <taxon>Bacteria</taxon>
        <taxon>Bacillati</taxon>
        <taxon>Actinomycetota</taxon>
        <taxon>Actinomycetes</taxon>
        <taxon>Mycobacteriales</taxon>
        <taxon>Mycobacteriaceae</taxon>
        <taxon>Mycobacterium</taxon>
        <taxon>Mycobacterium tuberculosis complex</taxon>
    </lineage>
</organism>
<sequence>MTAATKATEYPSAVAKARFVRVSPRKARRVIDLVRGRSVSDALDILRWAPQAASGPVAKVIASAAANAQNNGGLDPATLVVATVYADQGPTAKRIRPRAQGRAFRIRRRTSHITVVVESRPAKDQRSAKSSRARRTEASKAASKVGATAPAKKAAAKAPAKKAPASSGVKKTPAKKAPAKKAPAKASETSAAKGGSD</sequence>
<accession>A5U092</accession>
<comment type="function">
    <text evidence="1">This protein binds specifically to 23S rRNA; its binding is stimulated by other ribosomal proteins, e.g. L4, L17, and L20. It is important during the early stages of 50S assembly. It makes multiple contacts with different domains of the 23S rRNA in the assembled 50S subunit and ribosome (By similarity).</text>
</comment>
<comment type="function">
    <text evidence="1">The globular domain of the protein is located near the polypeptide exit tunnel on the outside of the subunit, while an extended beta-hairpin is found that lines the wall of the exit tunnel in the center of the 70S ribosome.</text>
</comment>
<comment type="subunit">
    <text evidence="1">Part of the 50S ribosomal subunit.</text>
</comment>
<comment type="similarity">
    <text evidence="1">Belongs to the universal ribosomal protein uL22 family.</text>
</comment>
<reference key="1">
    <citation type="journal article" date="2008" name="PLoS ONE">
        <title>Genetic basis of virulence attenuation revealed by comparative genomic analysis of Mycobacterium tuberculosis strain H37Ra versus H37Rv.</title>
        <authorList>
            <person name="Zheng H."/>
            <person name="Lu L."/>
            <person name="Wang B."/>
            <person name="Pu S."/>
            <person name="Zhang X."/>
            <person name="Zhu G."/>
            <person name="Shi W."/>
            <person name="Zhang L."/>
            <person name="Wang H."/>
            <person name="Wang S."/>
            <person name="Zhao G."/>
            <person name="Zhang Y."/>
        </authorList>
    </citation>
    <scope>NUCLEOTIDE SEQUENCE [LARGE SCALE GENOMIC DNA]</scope>
    <source>
        <strain>ATCC 25177 / H37Ra</strain>
    </source>
</reference>
<gene>
    <name evidence="1" type="primary">rplV</name>
    <name type="ordered locus">MRA_0714</name>
</gene>
<feature type="chain" id="PRO_0000354492" description="Large ribosomal subunit protein uL22">
    <location>
        <begin position="1"/>
        <end position="197"/>
    </location>
</feature>
<feature type="region of interest" description="Disordered" evidence="2">
    <location>
        <begin position="118"/>
        <end position="197"/>
    </location>
</feature>
<feature type="compositionally biased region" description="Low complexity" evidence="2">
    <location>
        <begin position="149"/>
        <end position="165"/>
    </location>
</feature>
<feature type="compositionally biased region" description="Basic residues" evidence="2">
    <location>
        <begin position="172"/>
        <end position="183"/>
    </location>
</feature>
<feature type="compositionally biased region" description="Low complexity" evidence="2">
    <location>
        <begin position="184"/>
        <end position="197"/>
    </location>
</feature>
<feature type="strand" evidence="4">
    <location>
        <begin position="14"/>
        <end position="22"/>
    </location>
</feature>
<feature type="helix" evidence="4">
    <location>
        <begin position="24"/>
        <end position="31"/>
    </location>
</feature>
<feature type="helix" evidence="4">
    <location>
        <begin position="39"/>
        <end position="46"/>
    </location>
</feature>
<feature type="helix" evidence="4">
    <location>
        <begin position="54"/>
        <end position="72"/>
    </location>
</feature>
<feature type="helix" evidence="4">
    <location>
        <begin position="76"/>
        <end position="78"/>
    </location>
</feature>
<feature type="strand" evidence="4">
    <location>
        <begin position="79"/>
        <end position="88"/>
    </location>
</feature>
<feature type="strand" evidence="4">
    <location>
        <begin position="94"/>
        <end position="97"/>
    </location>
</feature>
<feature type="strand" evidence="4">
    <location>
        <begin position="103"/>
        <end position="106"/>
    </location>
</feature>
<feature type="strand" evidence="4">
    <location>
        <begin position="111"/>
        <end position="119"/>
    </location>
</feature>
<proteinExistence type="evidence at protein level"/>
<name>RL22_MYCTA</name>